<dbReference type="EC" id="2.3.2.27" evidence="2"/>
<dbReference type="EMBL" id="AK034859">
    <property type="protein sequence ID" value="BAC28857.1"/>
    <property type="molecule type" value="mRNA"/>
</dbReference>
<dbReference type="EMBL" id="AK075637">
    <property type="protein sequence ID" value="BAC35873.1"/>
    <property type="status" value="ALT_INIT"/>
    <property type="molecule type" value="mRNA"/>
</dbReference>
<dbReference type="EMBL" id="AK145800">
    <property type="protein sequence ID" value="BAE26657.1"/>
    <property type="molecule type" value="mRNA"/>
</dbReference>
<dbReference type="EMBL" id="AK152523">
    <property type="protein sequence ID" value="BAE31283.1"/>
    <property type="molecule type" value="mRNA"/>
</dbReference>
<dbReference type="EMBL" id="AK169149">
    <property type="protein sequence ID" value="BAE40928.1"/>
    <property type="molecule type" value="mRNA"/>
</dbReference>
<dbReference type="EMBL" id="BC039054">
    <property type="protein sequence ID" value="AAH39054.1"/>
    <property type="molecule type" value="mRNA"/>
</dbReference>
<dbReference type="EMBL" id="BC058687">
    <property type="protein sequence ID" value="AAH58687.1"/>
    <property type="molecule type" value="mRNA"/>
</dbReference>
<dbReference type="EMBL" id="AF263247">
    <property type="protein sequence ID" value="AAF72195.1"/>
    <property type="molecule type" value="mRNA"/>
</dbReference>
<dbReference type="CCDS" id="CCDS39063.1">
    <molecule id="Q4VC33-1"/>
</dbReference>
<dbReference type="RefSeq" id="NP_067475.2">
    <molecule id="Q4VC33-1"/>
    <property type="nucleotide sequence ID" value="NM_021500.3"/>
</dbReference>
<dbReference type="SMR" id="Q4VC33"/>
<dbReference type="BioGRID" id="208474">
    <property type="interactions" value="3"/>
</dbReference>
<dbReference type="FunCoup" id="Q4VC33">
    <property type="interactions" value="2362"/>
</dbReference>
<dbReference type="IntAct" id="Q4VC33">
    <property type="interactions" value="1"/>
</dbReference>
<dbReference type="STRING" id="10090.ENSMUSP00000110093"/>
<dbReference type="iPTMnet" id="Q4VC33"/>
<dbReference type="PhosphoSitePlus" id="Q4VC33"/>
<dbReference type="SwissPalm" id="Q4VC33"/>
<dbReference type="PaxDb" id="10090-ENSMUSP00000110093"/>
<dbReference type="PeptideAtlas" id="Q4VC33"/>
<dbReference type="ProteomicsDB" id="252710">
    <molecule id="Q4VC33-1"/>
</dbReference>
<dbReference type="ProteomicsDB" id="252711">
    <molecule id="Q4VC33-2"/>
</dbReference>
<dbReference type="Pumba" id="Q4VC33"/>
<dbReference type="Antibodypedia" id="8374">
    <property type="antibodies" value="270 antibodies from 33 providers"/>
</dbReference>
<dbReference type="DNASU" id="59003"/>
<dbReference type="Ensembl" id="ENSMUST00000114449.7">
    <molecule id="Q4VC33-1"/>
    <property type="protein sequence ID" value="ENSMUSP00000110093.4"/>
    <property type="gene ID" value="ENSMUSG00000079562.8"/>
</dbReference>
<dbReference type="GeneID" id="59003"/>
<dbReference type="KEGG" id="mmu:59003"/>
<dbReference type="UCSC" id="uc008xap.1">
    <molecule id="Q4VC33-1"/>
    <property type="organism name" value="mouse"/>
</dbReference>
<dbReference type="AGR" id="MGI:1891748"/>
<dbReference type="CTD" id="10296"/>
<dbReference type="MGI" id="MGI:1891748">
    <property type="gene designation" value="Maea"/>
</dbReference>
<dbReference type="VEuPathDB" id="HostDB:ENSMUSG00000079562"/>
<dbReference type="eggNOG" id="KOG0396">
    <property type="taxonomic scope" value="Eukaryota"/>
</dbReference>
<dbReference type="GeneTree" id="ENSGT00940000153203"/>
<dbReference type="HOGENOM" id="CLU_027445_0_1_1"/>
<dbReference type="InParanoid" id="Q4VC33"/>
<dbReference type="OMA" id="ANHETAR"/>
<dbReference type="OrthoDB" id="1933455at2759"/>
<dbReference type="PhylomeDB" id="Q4VC33"/>
<dbReference type="TreeFam" id="TF314273"/>
<dbReference type="Reactome" id="R-MMU-9861718">
    <property type="pathway name" value="Regulation of pyruvate metabolism"/>
</dbReference>
<dbReference type="BioGRID-ORCS" id="59003">
    <property type="hits" value="9 hits in 82 CRISPR screens"/>
</dbReference>
<dbReference type="ChiTaRS" id="Maea">
    <property type="organism name" value="mouse"/>
</dbReference>
<dbReference type="PRO" id="PR:Q4VC33"/>
<dbReference type="Proteomes" id="UP000000589">
    <property type="component" value="Chromosome 5"/>
</dbReference>
<dbReference type="RNAct" id="Q4VC33">
    <property type="molecule type" value="protein"/>
</dbReference>
<dbReference type="Bgee" id="ENSMUSG00000079562">
    <property type="expression patterns" value="Expressed in granulocyte and 266 other cell types or tissues"/>
</dbReference>
<dbReference type="ExpressionAtlas" id="Q4VC33">
    <property type="expression patterns" value="baseline and differential"/>
</dbReference>
<dbReference type="GO" id="GO:0015629">
    <property type="term" value="C:actin cytoskeleton"/>
    <property type="evidence" value="ECO:0000314"/>
    <property type="project" value="MGI"/>
</dbReference>
<dbReference type="GO" id="GO:0005826">
    <property type="term" value="C:actomyosin contractile ring"/>
    <property type="evidence" value="ECO:0007669"/>
    <property type="project" value="Ensembl"/>
</dbReference>
<dbReference type="GO" id="GO:0016363">
    <property type="term" value="C:nuclear matrix"/>
    <property type="evidence" value="ECO:0007669"/>
    <property type="project" value="UniProtKB-SubCell"/>
</dbReference>
<dbReference type="GO" id="GO:0005654">
    <property type="term" value="C:nucleoplasm"/>
    <property type="evidence" value="ECO:0000250"/>
    <property type="project" value="UniProtKB"/>
</dbReference>
<dbReference type="GO" id="GO:0005886">
    <property type="term" value="C:plasma membrane"/>
    <property type="evidence" value="ECO:0007669"/>
    <property type="project" value="UniProtKB-SubCell"/>
</dbReference>
<dbReference type="GO" id="GO:0005819">
    <property type="term" value="C:spindle"/>
    <property type="evidence" value="ECO:0007669"/>
    <property type="project" value="Ensembl"/>
</dbReference>
<dbReference type="GO" id="GO:0000151">
    <property type="term" value="C:ubiquitin ligase complex"/>
    <property type="evidence" value="ECO:0007669"/>
    <property type="project" value="Ensembl"/>
</dbReference>
<dbReference type="GO" id="GO:0003779">
    <property type="term" value="F:actin binding"/>
    <property type="evidence" value="ECO:0000314"/>
    <property type="project" value="MGI"/>
</dbReference>
<dbReference type="GO" id="GO:0061630">
    <property type="term" value="F:ubiquitin protein ligase activity"/>
    <property type="evidence" value="ECO:0007669"/>
    <property type="project" value="InterPro"/>
</dbReference>
<dbReference type="GO" id="GO:0008270">
    <property type="term" value="F:zinc ion binding"/>
    <property type="evidence" value="ECO:0007669"/>
    <property type="project" value="UniProtKB-KW"/>
</dbReference>
<dbReference type="GO" id="GO:0007155">
    <property type="term" value="P:cell adhesion"/>
    <property type="evidence" value="ECO:0007669"/>
    <property type="project" value="Ensembl"/>
</dbReference>
<dbReference type="GO" id="GO:0051301">
    <property type="term" value="P:cell division"/>
    <property type="evidence" value="ECO:0007669"/>
    <property type="project" value="UniProtKB-KW"/>
</dbReference>
<dbReference type="GO" id="GO:0007010">
    <property type="term" value="P:cytoskeleton organization"/>
    <property type="evidence" value="ECO:0000315"/>
    <property type="project" value="MGI"/>
</dbReference>
<dbReference type="GO" id="GO:0048822">
    <property type="term" value="P:enucleate erythrocyte development"/>
    <property type="evidence" value="ECO:0000315"/>
    <property type="project" value="MGI"/>
</dbReference>
<dbReference type="GO" id="GO:0048821">
    <property type="term" value="P:erythrocyte development"/>
    <property type="evidence" value="ECO:0000315"/>
    <property type="project" value="MGI"/>
</dbReference>
<dbReference type="GO" id="GO:0043249">
    <property type="term" value="P:erythrocyte maturation"/>
    <property type="evidence" value="ECO:0007669"/>
    <property type="project" value="UniProtKB-KW"/>
</dbReference>
<dbReference type="GO" id="GO:0033033">
    <property type="term" value="P:negative regulation of myeloid cell apoptotic process"/>
    <property type="evidence" value="ECO:0007669"/>
    <property type="project" value="Ensembl"/>
</dbReference>
<dbReference type="GO" id="GO:0043161">
    <property type="term" value="P:proteasome-mediated ubiquitin-dependent protein catabolic process"/>
    <property type="evidence" value="ECO:0007669"/>
    <property type="project" value="InterPro"/>
</dbReference>
<dbReference type="CDD" id="cd16659">
    <property type="entry name" value="RING-Ubox_Emp"/>
    <property type="match status" value="1"/>
</dbReference>
<dbReference type="InterPro" id="IPR013144">
    <property type="entry name" value="CRA_dom"/>
</dbReference>
<dbReference type="InterPro" id="IPR024964">
    <property type="entry name" value="CTLH/CRA"/>
</dbReference>
<dbReference type="InterPro" id="IPR006595">
    <property type="entry name" value="CTLH_C"/>
</dbReference>
<dbReference type="InterPro" id="IPR045098">
    <property type="entry name" value="Fyv10_fam"/>
</dbReference>
<dbReference type="InterPro" id="IPR006594">
    <property type="entry name" value="LisH"/>
</dbReference>
<dbReference type="InterPro" id="IPR044063">
    <property type="entry name" value="ZF_RING_GID"/>
</dbReference>
<dbReference type="PANTHER" id="PTHR12170:SF2">
    <property type="entry name" value="E3 UBIQUITIN-PROTEIN TRANSFERASE MAEA"/>
    <property type="match status" value="1"/>
</dbReference>
<dbReference type="PANTHER" id="PTHR12170">
    <property type="entry name" value="MACROPHAGE ERYTHROBLAST ATTACHER-RELATED"/>
    <property type="match status" value="1"/>
</dbReference>
<dbReference type="Pfam" id="PF10607">
    <property type="entry name" value="CTLH"/>
    <property type="match status" value="1"/>
</dbReference>
<dbReference type="SMART" id="SM00757">
    <property type="entry name" value="CRA"/>
    <property type="match status" value="1"/>
</dbReference>
<dbReference type="SMART" id="SM00668">
    <property type="entry name" value="CTLH"/>
    <property type="match status" value="1"/>
</dbReference>
<dbReference type="SMART" id="SM00667">
    <property type="entry name" value="LisH"/>
    <property type="match status" value="1"/>
</dbReference>
<dbReference type="SUPFAM" id="SSF57850">
    <property type="entry name" value="RING/U-box"/>
    <property type="match status" value="1"/>
</dbReference>
<dbReference type="PROSITE" id="PS50897">
    <property type="entry name" value="CTLH"/>
    <property type="match status" value="1"/>
</dbReference>
<dbReference type="PROSITE" id="PS50896">
    <property type="entry name" value="LISH"/>
    <property type="match status" value="1"/>
</dbReference>
<dbReference type="PROSITE" id="PS51867">
    <property type="entry name" value="ZF_RING_GID"/>
    <property type="match status" value="1"/>
</dbReference>
<feature type="chain" id="PRO_0000284938" description="E3 ubiquitin-protein transferase MAEA">
    <location>
        <begin position="1"/>
        <end position="396"/>
    </location>
</feature>
<feature type="domain" description="LisH" evidence="4">
    <location>
        <begin position="121"/>
        <end position="153"/>
    </location>
</feature>
<feature type="domain" description="CTLH" evidence="3">
    <location>
        <begin position="159"/>
        <end position="216"/>
    </location>
</feature>
<feature type="zinc finger region" description="RING-Gid-type" evidence="5">
    <location>
        <begin position="314"/>
        <end position="381"/>
    </location>
</feature>
<feature type="region of interest" description="Extracellular and involved in cell to cell contact" evidence="2">
    <location>
        <begin position="1"/>
        <end position="124"/>
    </location>
</feature>
<feature type="site" description="Essential for ubiquitin ligase activity" evidence="1">
    <location>
        <position position="314"/>
    </location>
</feature>
<feature type="modified residue" description="Phosphothreonine" evidence="2">
    <location>
        <position position="28"/>
    </location>
</feature>
<feature type="splice variant" id="VSP_024797" description="In isoform 2." evidence="11">
    <original>M</original>
    <variation>MYAPSCYGHALGQSGGGWEPCPPALTPDPRPQPASTFVSCDQRSVSNDKYS</variation>
    <location>
        <position position="396"/>
    </location>
</feature>
<feature type="sequence conflict" description="In Ref. 1; BAE31283." evidence="12" ref="1">
    <original>Q</original>
    <variation>R</variation>
    <location>
        <position position="148"/>
    </location>
</feature>
<feature type="sequence conflict" description="In Ref. 1; BAC28857." evidence="12" ref="1">
    <original>Q</original>
    <variation>R</variation>
    <location>
        <position position="203"/>
    </location>
</feature>
<feature type="sequence conflict" description="In Ref. 1; BAE40928." evidence="12" ref="1">
    <original>I</original>
    <variation>V</variation>
    <location>
        <position position="206"/>
    </location>
</feature>
<feature type="sequence conflict" description="In Ref. 1; BAE31283." evidence="12" ref="1">
    <original>Q</original>
    <variation>R</variation>
    <location>
        <position position="326"/>
    </location>
</feature>
<sequence length="396" mass="45336">MAVQESAAQLSMTLKVQEYPTLKVPYETLNKRFRAAQKNIDRETSHVTMVVAELEKTLSSCPAVDSVVSLLDGVVEKLSVLKRKAVESIQAEDESAKLCKRRIEHLKEHSSDQPAAASMWKRKRMDRMMVEHLLRCGYYNTAVKLARQSGIEDLVNIEMFLTAKEVEESLERRETATCLAWCHDNKSRLRKMKSCLEFSLRIQEFIELVRQNKRLDAVRHARKHFSQAEGSQLDEVRQVMGMLAFPPDTHISPYKDLLDPARWRMLIQQFRYDNYRLHQLGNSSVFTLTLQAGLSAIKTPQCYKEDGSSKSPDCPVCSRSLNKLAQPLPMAHCANSRLVCKISGDVMNENNPPMMLPNGYVYGYNSLLSIRQDDKVVCPRTKEVFHFSQAEKVYIM</sequence>
<accession>Q4VC33</accession>
<accession>Q3TFH0</accession>
<accession>Q3U7T6</accession>
<accession>Q5XKE6</accession>
<accession>Q8BPI3</accession>
<accession>Q8BSA1</accession>
<accession>Q9JK49</accession>
<name>MAEA_MOUSE</name>
<reference key="1">
    <citation type="journal article" date="2005" name="Science">
        <title>The transcriptional landscape of the mammalian genome.</title>
        <authorList>
            <person name="Carninci P."/>
            <person name="Kasukawa T."/>
            <person name="Katayama S."/>
            <person name="Gough J."/>
            <person name="Frith M.C."/>
            <person name="Maeda N."/>
            <person name="Oyama R."/>
            <person name="Ravasi T."/>
            <person name="Lenhard B."/>
            <person name="Wells C."/>
            <person name="Kodzius R."/>
            <person name="Shimokawa K."/>
            <person name="Bajic V.B."/>
            <person name="Brenner S.E."/>
            <person name="Batalov S."/>
            <person name="Forrest A.R."/>
            <person name="Zavolan M."/>
            <person name="Davis M.J."/>
            <person name="Wilming L.G."/>
            <person name="Aidinis V."/>
            <person name="Allen J.E."/>
            <person name="Ambesi-Impiombato A."/>
            <person name="Apweiler R."/>
            <person name="Aturaliya R.N."/>
            <person name="Bailey T.L."/>
            <person name="Bansal M."/>
            <person name="Baxter L."/>
            <person name="Beisel K.W."/>
            <person name="Bersano T."/>
            <person name="Bono H."/>
            <person name="Chalk A.M."/>
            <person name="Chiu K.P."/>
            <person name="Choudhary V."/>
            <person name="Christoffels A."/>
            <person name="Clutterbuck D.R."/>
            <person name="Crowe M.L."/>
            <person name="Dalla E."/>
            <person name="Dalrymple B.P."/>
            <person name="de Bono B."/>
            <person name="Della Gatta G."/>
            <person name="di Bernardo D."/>
            <person name="Down T."/>
            <person name="Engstrom P."/>
            <person name="Fagiolini M."/>
            <person name="Faulkner G."/>
            <person name="Fletcher C.F."/>
            <person name="Fukushima T."/>
            <person name="Furuno M."/>
            <person name="Futaki S."/>
            <person name="Gariboldi M."/>
            <person name="Georgii-Hemming P."/>
            <person name="Gingeras T.R."/>
            <person name="Gojobori T."/>
            <person name="Green R.E."/>
            <person name="Gustincich S."/>
            <person name="Harbers M."/>
            <person name="Hayashi Y."/>
            <person name="Hensch T.K."/>
            <person name="Hirokawa N."/>
            <person name="Hill D."/>
            <person name="Huminiecki L."/>
            <person name="Iacono M."/>
            <person name="Ikeo K."/>
            <person name="Iwama A."/>
            <person name="Ishikawa T."/>
            <person name="Jakt M."/>
            <person name="Kanapin A."/>
            <person name="Katoh M."/>
            <person name="Kawasawa Y."/>
            <person name="Kelso J."/>
            <person name="Kitamura H."/>
            <person name="Kitano H."/>
            <person name="Kollias G."/>
            <person name="Krishnan S.P."/>
            <person name="Kruger A."/>
            <person name="Kummerfeld S.K."/>
            <person name="Kurochkin I.V."/>
            <person name="Lareau L.F."/>
            <person name="Lazarevic D."/>
            <person name="Lipovich L."/>
            <person name="Liu J."/>
            <person name="Liuni S."/>
            <person name="McWilliam S."/>
            <person name="Madan Babu M."/>
            <person name="Madera M."/>
            <person name="Marchionni L."/>
            <person name="Matsuda H."/>
            <person name="Matsuzawa S."/>
            <person name="Miki H."/>
            <person name="Mignone F."/>
            <person name="Miyake S."/>
            <person name="Morris K."/>
            <person name="Mottagui-Tabar S."/>
            <person name="Mulder N."/>
            <person name="Nakano N."/>
            <person name="Nakauchi H."/>
            <person name="Ng P."/>
            <person name="Nilsson R."/>
            <person name="Nishiguchi S."/>
            <person name="Nishikawa S."/>
            <person name="Nori F."/>
            <person name="Ohara O."/>
            <person name="Okazaki Y."/>
            <person name="Orlando V."/>
            <person name="Pang K.C."/>
            <person name="Pavan W.J."/>
            <person name="Pavesi G."/>
            <person name="Pesole G."/>
            <person name="Petrovsky N."/>
            <person name="Piazza S."/>
            <person name="Reed J."/>
            <person name="Reid J.F."/>
            <person name="Ring B.Z."/>
            <person name="Ringwald M."/>
            <person name="Rost B."/>
            <person name="Ruan Y."/>
            <person name="Salzberg S.L."/>
            <person name="Sandelin A."/>
            <person name="Schneider C."/>
            <person name="Schoenbach C."/>
            <person name="Sekiguchi K."/>
            <person name="Semple C.A."/>
            <person name="Seno S."/>
            <person name="Sessa L."/>
            <person name="Sheng Y."/>
            <person name="Shibata Y."/>
            <person name="Shimada H."/>
            <person name="Shimada K."/>
            <person name="Silva D."/>
            <person name="Sinclair B."/>
            <person name="Sperling S."/>
            <person name="Stupka E."/>
            <person name="Sugiura K."/>
            <person name="Sultana R."/>
            <person name="Takenaka Y."/>
            <person name="Taki K."/>
            <person name="Tammoja K."/>
            <person name="Tan S.L."/>
            <person name="Tang S."/>
            <person name="Taylor M.S."/>
            <person name="Tegner J."/>
            <person name="Teichmann S.A."/>
            <person name="Ueda H.R."/>
            <person name="van Nimwegen E."/>
            <person name="Verardo R."/>
            <person name="Wei C.L."/>
            <person name="Yagi K."/>
            <person name="Yamanishi H."/>
            <person name="Zabarovsky E."/>
            <person name="Zhu S."/>
            <person name="Zimmer A."/>
            <person name="Hide W."/>
            <person name="Bult C."/>
            <person name="Grimmond S.M."/>
            <person name="Teasdale R.D."/>
            <person name="Liu E.T."/>
            <person name="Brusic V."/>
            <person name="Quackenbush J."/>
            <person name="Wahlestedt C."/>
            <person name="Mattick J.S."/>
            <person name="Hume D.A."/>
            <person name="Kai C."/>
            <person name="Sasaki D."/>
            <person name="Tomaru Y."/>
            <person name="Fukuda S."/>
            <person name="Kanamori-Katayama M."/>
            <person name="Suzuki M."/>
            <person name="Aoki J."/>
            <person name="Arakawa T."/>
            <person name="Iida J."/>
            <person name="Imamura K."/>
            <person name="Itoh M."/>
            <person name="Kato T."/>
            <person name="Kawaji H."/>
            <person name="Kawagashira N."/>
            <person name="Kawashima T."/>
            <person name="Kojima M."/>
            <person name="Kondo S."/>
            <person name="Konno H."/>
            <person name="Nakano K."/>
            <person name="Ninomiya N."/>
            <person name="Nishio T."/>
            <person name="Okada M."/>
            <person name="Plessy C."/>
            <person name="Shibata K."/>
            <person name="Shiraki T."/>
            <person name="Suzuki S."/>
            <person name="Tagami M."/>
            <person name="Waki K."/>
            <person name="Watahiki A."/>
            <person name="Okamura-Oho Y."/>
            <person name="Suzuki H."/>
            <person name="Kawai J."/>
            <person name="Hayashizaki Y."/>
        </authorList>
    </citation>
    <scope>NUCLEOTIDE SEQUENCE [LARGE SCALE MRNA] (ISOFORM 1)</scope>
    <source>
        <strain>C57BL/6J</strain>
        <tissue>Bone marrow</tissue>
        <tissue>Embryo</tissue>
        <tissue>Heart</tissue>
    </source>
</reference>
<reference key="2">
    <citation type="journal article" date="2004" name="Genome Res.">
        <title>The status, quality, and expansion of the NIH full-length cDNA project: the Mammalian Gene Collection (MGC).</title>
        <authorList>
            <consortium name="The MGC Project Team"/>
        </authorList>
    </citation>
    <scope>NUCLEOTIDE SEQUENCE [LARGE SCALE MRNA] (ISOFORM 1)</scope>
    <source>
        <strain>C57BL/6J</strain>
        <strain>FVB/N</strain>
        <tissue>Brain</tissue>
        <tissue>Mammary tumor</tissue>
    </source>
</reference>
<reference key="3">
    <citation type="submission" date="2000-05" db="EMBL/GenBank/DDBJ databases">
        <title>cDNA sequence and genomic structure of the mouse erythroblast macrophage protein (EMP) gene.</title>
        <authorList>
            <person name="Dua M."/>
            <person name="Peters L.L."/>
            <person name="Hanspal M."/>
        </authorList>
    </citation>
    <scope>NUCLEOTIDE SEQUENCE [MRNA] OF 12-396 (ISOFORM 2)</scope>
</reference>
<reference key="4">
    <citation type="journal article" date="2006" name="Biochem. Biophys. Res. Commun.">
        <title>Emp is a component of the nuclear matrix of mammalian cells and undergoes dynamic rearrangements during cell division.</title>
        <authorList>
            <person name="Bala S."/>
            <person name="Kumar A."/>
            <person name="Soni S."/>
            <person name="Sinha S."/>
            <person name="Hanspal M."/>
        </authorList>
    </citation>
    <scope>TISSUE SPECIFICITY</scope>
</reference>
<reference key="5">
    <citation type="journal article" date="2006" name="J. Biol. Chem.">
        <title>Absence of erythroblast macrophage protein (Emp) leads to failure of erythroblast nuclear extrusion.</title>
        <authorList>
            <person name="Soni S."/>
            <person name="Bala S."/>
            <person name="Gwynn B."/>
            <person name="Sahr K.E."/>
            <person name="Peters L.L."/>
            <person name="Hanspal M."/>
        </authorList>
    </citation>
    <scope>DISRUPTION PHENOTYPE</scope>
    <scope>SUBUNIT</scope>
    <scope>FUNCTION</scope>
    <scope>TISSUE SPECIFICITY</scope>
    <scope>SUBCELLULAR LOCATION</scope>
</reference>
<reference key="6">
    <citation type="journal article" date="2007" name="Blood Cells Mol. Dis.">
        <title>Changing pattern of the subcellular distribution of erythroblast macrophage protein (Emp) during macrophage differentiation.</title>
        <authorList>
            <person name="Soni S."/>
            <person name="Bala S."/>
            <person name="Kumar A."/>
            <person name="Hanspal M."/>
        </authorList>
    </citation>
    <scope>SUBCELLULAR LOCATION</scope>
    <scope>FUNCTION</scope>
    <scope>TISSUE SPECIFICITY</scope>
</reference>
<reference key="7">
    <citation type="journal article" date="2010" name="Cell">
        <title>A tissue-specific atlas of mouse protein phosphorylation and expression.</title>
        <authorList>
            <person name="Huttlin E.L."/>
            <person name="Jedrychowski M.P."/>
            <person name="Elias J.E."/>
            <person name="Goswami T."/>
            <person name="Rad R."/>
            <person name="Beausoleil S.A."/>
            <person name="Villen J."/>
            <person name="Haas W."/>
            <person name="Sowa M.E."/>
            <person name="Gygi S.P."/>
        </authorList>
    </citation>
    <scope>IDENTIFICATION BY MASS SPECTROMETRY [LARGE SCALE ANALYSIS]</scope>
    <source>
        <tissue>Brain</tissue>
        <tissue>Spleen</tissue>
        <tissue>Testis</tissue>
    </source>
</reference>
<proteinExistence type="evidence at protein level"/>
<comment type="function">
    <text evidence="2 7 8">Core component of the CTLH E3 ubiquitin-protein ligase complex that selectively accepts ubiquitin from UBE2H and mediates ubiquitination and subsequent proteasomal degradation of the transcription factor HBP1. MAEA and RMND5A are both required for catalytic activity of the CTLH E3 ubiquitin-protein ligase complex. MAEA is required for normal cell proliferation. The CTLH E3 ubiquitin-protein ligase complex is not required for the degradation of enzymes involved in gluconeogenesis, such as FBP1 (By similarity). Plays a role in erythroblast enucleation during erythrocyte maturation and in the development of mature macrophages (PubMed:16707498). Mediates the attachment of erythroid cell to mature macrophages; this MAEA-mediated contact inhibits erythroid cell apoptosis (By similarity). Participates in erythroblastic island formation, which is the functional unit of definitive erythropoiesis (PubMed:16707498, PubMed:17071116). Associates with F-actin to regulate actin distribution in erythroblasts and macrophages (PubMed:16707498). May contribute to nuclear architecture and cells division events (By similarity).</text>
</comment>
<comment type="catalytic activity">
    <reaction evidence="2">
        <text>S-ubiquitinyl-[E2 ubiquitin-conjugating enzyme]-L-cysteine + [acceptor protein]-L-lysine = [E2 ubiquitin-conjugating enzyme]-L-cysteine + N(6)-ubiquitinyl-[acceptor protein]-L-lysine.</text>
        <dbReference type="EC" id="2.3.2.27"/>
    </reaction>
</comment>
<comment type="subunit">
    <text evidence="2 7">Identified in the CTLH complex that contains GID4, RANBP9 and/or RANBP10, MKLN1, MAEA, RMND5A (or alternatively its paralog RMND5B), GID8, ARMC8, WDR26 and YPEL5. Within this complex, MAEA, RMND5A (or alternatively its paralog RMND5B), GID8, WDR26, and RANBP9 and/or RANBP10 form the catalytic core, while GID4, MKLN1, ARMC8 and YPEL5 have ancillary roles (By similarity). Interacts with F-actin (PubMed:16707498).</text>
</comment>
<comment type="subcellular location">
    <subcellularLocation>
        <location evidence="8">Cytoplasm</location>
    </subcellularLocation>
    <subcellularLocation>
        <location evidence="2">Nucleus</location>
        <location evidence="2">Nucleoplasm</location>
    </subcellularLocation>
    <subcellularLocation>
        <location evidence="8">Nucleus matrix</location>
    </subcellularLocation>
    <subcellularLocation>
        <location evidence="8">Cell membrane</location>
    </subcellularLocation>
    <subcellularLocation>
        <location evidence="7 8">Cytoplasm</location>
        <location evidence="7 8">Cytoskeleton</location>
    </subcellularLocation>
    <text evidence="2 7 8">Detected in a nuclear, speckled-like pattern (PubMed:17071116). Localized with condensed chromatin at prophase; Detected in nuclear spindle poles at metaphase and in the contractile ring during telophase and cytokinesis (By similarity). Present in cytoplasm, nuclear matrix and at the cell surface in macrophages; predominantly nuclear in immature macrophages and predominantly detected at the cell surface in mature macrophages (PubMed:17071116). Colocalizes with F-actin in macrophages (PubMed:16707498).</text>
</comment>
<comment type="alternative products">
    <event type="alternative splicing"/>
    <isoform>
        <id>Q4VC33-1</id>
        <name>1</name>
        <sequence type="displayed"/>
    </isoform>
    <isoform>
        <id>Q4VC33-2</id>
        <name>2</name>
        <sequence type="described" ref="VSP_024797"/>
    </isoform>
</comment>
<comment type="tissue specificity">
    <text evidence="6 7 8">Detected in embryonic fibroblasts (PubMed:16707498). Detected in macrophages (PubMed:17071116). Detected in heart. liver, spleen and kidney (at protein level) (PubMed:16510120).</text>
</comment>
<comment type="domain">
    <text evidence="2">The expected RING-type zinc finger domain is highly divergent and most of the expected Cys residues are not conserved. Still, the protein is required for CTLH complex E3 ubiquitin-protein transferase activity. In addition, the conserved Cys-314 in this highly divergent region is required for ubiquitination by the yeast GID complex, suggesting a direct role in catalyzing ubiquitination.</text>
</comment>
<comment type="PTM">
    <text evidence="2">Autoubiquitinated as component of the CTLH E3 ubiquitin-protein ligase complex (in vitro).</text>
</comment>
<comment type="disruption phenotype">
    <text evidence="7">Mice die perinatally and exhibit profound alterations in the hematopoietic system. Blood of 14.5-16.5 dpc embryos contained mostly nucleated erythrocytes suggesting a defect in terminal maturation and enucleation of precursor cells. In the fetal liver, large immature erythroblasts predominate, macrophage exhibit an immature morphology and their number is reduced; No erythroblasts are attached to the macrophages suggesting impairment of erythroblastic island formation.</text>
</comment>
<comment type="sequence caution" evidence="12">
    <conflict type="erroneous initiation">
        <sequence resource="EMBL-CDS" id="BAC35873"/>
    </conflict>
</comment>
<organism>
    <name type="scientific">Mus musculus</name>
    <name type="common">Mouse</name>
    <dbReference type="NCBI Taxonomy" id="10090"/>
    <lineage>
        <taxon>Eukaryota</taxon>
        <taxon>Metazoa</taxon>
        <taxon>Chordata</taxon>
        <taxon>Craniata</taxon>
        <taxon>Vertebrata</taxon>
        <taxon>Euteleostomi</taxon>
        <taxon>Mammalia</taxon>
        <taxon>Eutheria</taxon>
        <taxon>Euarchontoglires</taxon>
        <taxon>Glires</taxon>
        <taxon>Rodentia</taxon>
        <taxon>Myomorpha</taxon>
        <taxon>Muroidea</taxon>
        <taxon>Muridae</taxon>
        <taxon>Murinae</taxon>
        <taxon>Mus</taxon>
        <taxon>Mus</taxon>
    </lineage>
</organism>
<gene>
    <name type="primary">Maea</name>
    <name evidence="9" type="synonym">Emp</name>
</gene>
<evidence type="ECO:0000250" key="1">
    <source>
        <dbReference type="UniProtKB" id="P40492"/>
    </source>
</evidence>
<evidence type="ECO:0000250" key="2">
    <source>
        <dbReference type="UniProtKB" id="Q7L5Y9"/>
    </source>
</evidence>
<evidence type="ECO:0000255" key="3">
    <source>
        <dbReference type="PROSITE-ProRule" id="PRU00058"/>
    </source>
</evidence>
<evidence type="ECO:0000255" key="4">
    <source>
        <dbReference type="PROSITE-ProRule" id="PRU00126"/>
    </source>
</evidence>
<evidence type="ECO:0000255" key="5">
    <source>
        <dbReference type="PROSITE-ProRule" id="PRU01215"/>
    </source>
</evidence>
<evidence type="ECO:0000269" key="6">
    <source>
    </source>
</evidence>
<evidence type="ECO:0000269" key="7">
    <source>
    </source>
</evidence>
<evidence type="ECO:0000269" key="8">
    <source>
    </source>
</evidence>
<evidence type="ECO:0000303" key="9">
    <source>
    </source>
</evidence>
<evidence type="ECO:0000303" key="10">
    <source>
    </source>
</evidence>
<evidence type="ECO:0000303" key="11">
    <source ref="3"/>
</evidence>
<evidence type="ECO:0000305" key="12"/>
<keyword id="KW-0009">Actin-binding</keyword>
<keyword id="KW-0025">Alternative splicing</keyword>
<keyword id="KW-0131">Cell cycle</keyword>
<keyword id="KW-0132">Cell division</keyword>
<keyword id="KW-1003">Cell membrane</keyword>
<keyword id="KW-0963">Cytoplasm</keyword>
<keyword id="KW-0206">Cytoskeleton</keyword>
<keyword id="KW-0265">Erythrocyte maturation</keyword>
<keyword id="KW-0472">Membrane</keyword>
<keyword id="KW-0479">Metal-binding</keyword>
<keyword id="KW-0539">Nucleus</keyword>
<keyword id="KW-0597">Phosphoprotein</keyword>
<keyword id="KW-1185">Reference proteome</keyword>
<keyword id="KW-0808">Transferase</keyword>
<keyword id="KW-0832">Ubl conjugation</keyword>
<keyword id="KW-0833">Ubl conjugation pathway</keyword>
<keyword id="KW-0862">Zinc</keyword>
<keyword id="KW-0863">Zinc-finger</keyword>
<protein>
    <recommendedName>
        <fullName>E3 ubiquitin-protein transferase MAEA</fullName>
        <ecNumber evidence="2">2.3.2.27</ecNumber>
    </recommendedName>
    <alternativeName>
        <fullName evidence="10">Erythroblast macrophage protein</fullName>
    </alternativeName>
    <alternativeName>
        <fullName>Macrophage erythroblast attacher</fullName>
    </alternativeName>
</protein>